<reference key="1">
    <citation type="journal article" date="2004" name="Peptides">
        <title>Identification and functional characterization of novel scorpion venom peptides with no disulfide bridge from Buthus martensii Karsch.</title>
        <authorList>
            <person name="Zeng X.-C."/>
            <person name="Wang S.-X."/>
            <person name="Zhu Y."/>
            <person name="Zhu S.-Y."/>
            <person name="Li W.-X."/>
        </authorList>
    </citation>
    <scope>NUCLEOTIDE SEQUENCE [MRNA]</scope>
    <source>
        <tissue>Venom gland</tissue>
    </source>
</reference>
<reference key="2">
    <citation type="journal article" date="2005" name="Peptides">
        <title>Genomic organization of four novel nondisulfide-bridged peptides from scorpion Mesobuthus martensii Karsch: gaining insight into evolutionary mechanism.</title>
        <authorList>
            <person name="Luo F."/>
            <person name="Zeng X.-C."/>
            <person name="Hahin R."/>
            <person name="Cao Z.-J."/>
            <person name="Liu H."/>
            <person name="Li W.-X."/>
        </authorList>
    </citation>
    <scope>NUCLEOTIDE SEQUENCE [GENOMIC DNA]</scope>
</reference>
<reference key="3">
    <citation type="journal article" date="2005" name="IUBMB Life">
        <title>Scorpion venom peptides without disulfide bridges.</title>
        <authorList>
            <person name="Zeng X.C."/>
            <person name="Corzo G."/>
            <person name="Hahin R."/>
        </authorList>
    </citation>
    <scope>NOMENCLATURE</scope>
</reference>
<proteinExistence type="inferred from homology"/>
<evidence type="ECO:0000250" key="1"/>
<evidence type="ECO:0000255" key="2"/>
<evidence type="ECO:0000303" key="3">
    <source>
    </source>
</evidence>
<evidence type="ECO:0000303" key="4">
    <source>
    </source>
</evidence>
<evidence type="ECO:0000305" key="5"/>
<feature type="signal peptide" evidence="2">
    <location>
        <begin position="1"/>
        <end position="24"/>
    </location>
</feature>
<feature type="chain" id="PRO_0000231495" description="Peptide BmKa2">
    <location>
        <begin position="25"/>
        <end position="74"/>
    </location>
</feature>
<sequence length="74" mass="8396">MSSKTLLVLLLVGVLVSTFFTADAYPASMDNYDDALEELDNLDLDDYFDLEPADFVLLDMWANMLESSDFDDME</sequence>
<keyword id="KW-0044">Antibiotic</keyword>
<keyword id="KW-0929">Antimicrobial</keyword>
<keyword id="KW-0964">Secreted</keyword>
<keyword id="KW-0732">Signal</keyword>
<name>NDB2S_OLIMR</name>
<comment type="function">
    <text evidence="1">Highly acidic peptide that may have antibacterial activity.</text>
</comment>
<comment type="subcellular location">
    <subcellularLocation>
        <location evidence="1">Secreted</location>
    </subcellularLocation>
</comment>
<comment type="tissue specificity">
    <text evidence="5">Expressed by the venom gland.</text>
</comment>
<comment type="similarity">
    <text evidence="5">Belongs to the non-disulfide-bridged peptide (NDBP) superfamily. Long chain multifunctional peptide (group 2) family.</text>
</comment>
<protein>
    <recommendedName>
        <fullName evidence="3">Peptide BmKa2</fullName>
    </recommendedName>
    <alternativeName>
        <fullName evidence="3">Acidic venom peptide Ka2</fullName>
    </alternativeName>
    <alternativeName>
        <fullName evidence="4">Non-disulfide-bridged peptide 6.2</fullName>
        <shortName evidence="4">NDBP-6.2</shortName>
    </alternativeName>
</protein>
<organism>
    <name type="scientific">Olivierus martensii</name>
    <name type="common">Manchurian scorpion</name>
    <name type="synonym">Mesobuthus martensii</name>
    <dbReference type="NCBI Taxonomy" id="34649"/>
    <lineage>
        <taxon>Eukaryota</taxon>
        <taxon>Metazoa</taxon>
        <taxon>Ecdysozoa</taxon>
        <taxon>Arthropoda</taxon>
        <taxon>Chelicerata</taxon>
        <taxon>Arachnida</taxon>
        <taxon>Scorpiones</taxon>
        <taxon>Buthida</taxon>
        <taxon>Buthoidea</taxon>
        <taxon>Buthidae</taxon>
        <taxon>Olivierus</taxon>
    </lineage>
</organism>
<dbReference type="EMBL" id="AF150012">
    <property type="protein sequence ID" value="AAM33226.1"/>
    <property type="molecule type" value="mRNA"/>
</dbReference>
<dbReference type="EMBL" id="AY648240">
    <property type="protein sequence ID" value="AAV64159.1"/>
    <property type="molecule type" value="Genomic_DNA"/>
</dbReference>
<dbReference type="GO" id="GO:0005576">
    <property type="term" value="C:extracellular region"/>
    <property type="evidence" value="ECO:0007669"/>
    <property type="project" value="UniProtKB-SubCell"/>
</dbReference>
<dbReference type="GO" id="GO:0042742">
    <property type="term" value="P:defense response to bacterium"/>
    <property type="evidence" value="ECO:0007669"/>
    <property type="project" value="UniProtKB-KW"/>
</dbReference>
<accession>Q8N0N8</accession>